<sequence length="183" mass="20217">MMIRAEDAGHGEEQTLLEWLAAQPGDPSFYAFLALLIFFGLLLHMGVHRTIAKTLDDRAEGISNELDEAKRLREDAAEMLASYQRKQREAEAEAEAIIAQAKTEAKSLKAEARKEMTERLERRTAMAEQRIAQAEAQAAADVKAAAAELAAQAAEEILKTQLKKSDLNKLVDADIKTVGQRLN</sequence>
<dbReference type="EMBL" id="CP000449">
    <property type="protein sequence ID" value="ABI66496.1"/>
    <property type="molecule type" value="Genomic_DNA"/>
</dbReference>
<dbReference type="RefSeq" id="WP_011644141.1">
    <property type="nucleotide sequence ID" value="NC_008347.1"/>
</dbReference>
<dbReference type="SMR" id="Q0AK30"/>
<dbReference type="STRING" id="394221.Mmar10_2204"/>
<dbReference type="KEGG" id="mmr:Mmar10_2204"/>
<dbReference type="eggNOG" id="COG0711">
    <property type="taxonomic scope" value="Bacteria"/>
</dbReference>
<dbReference type="HOGENOM" id="CLU_079215_6_1_5"/>
<dbReference type="OrthoDB" id="7632233at2"/>
<dbReference type="Proteomes" id="UP000001964">
    <property type="component" value="Chromosome"/>
</dbReference>
<dbReference type="GO" id="GO:0005886">
    <property type="term" value="C:plasma membrane"/>
    <property type="evidence" value="ECO:0007669"/>
    <property type="project" value="UniProtKB-SubCell"/>
</dbReference>
<dbReference type="GO" id="GO:0045259">
    <property type="term" value="C:proton-transporting ATP synthase complex"/>
    <property type="evidence" value="ECO:0007669"/>
    <property type="project" value="UniProtKB-KW"/>
</dbReference>
<dbReference type="GO" id="GO:0046933">
    <property type="term" value="F:proton-transporting ATP synthase activity, rotational mechanism"/>
    <property type="evidence" value="ECO:0007669"/>
    <property type="project" value="UniProtKB-UniRule"/>
</dbReference>
<dbReference type="GO" id="GO:0046961">
    <property type="term" value="F:proton-transporting ATPase activity, rotational mechanism"/>
    <property type="evidence" value="ECO:0007669"/>
    <property type="project" value="TreeGrafter"/>
</dbReference>
<dbReference type="CDD" id="cd06503">
    <property type="entry name" value="ATP-synt_Fo_b"/>
    <property type="match status" value="1"/>
</dbReference>
<dbReference type="HAMAP" id="MF_01398">
    <property type="entry name" value="ATP_synth_b_bprime"/>
    <property type="match status" value="1"/>
</dbReference>
<dbReference type="InterPro" id="IPR002146">
    <property type="entry name" value="ATP_synth_b/b'su_bac/chlpt"/>
</dbReference>
<dbReference type="InterPro" id="IPR050059">
    <property type="entry name" value="ATP_synthase_B_chain"/>
</dbReference>
<dbReference type="PANTHER" id="PTHR33445:SF1">
    <property type="entry name" value="ATP SYNTHASE SUBUNIT B"/>
    <property type="match status" value="1"/>
</dbReference>
<dbReference type="PANTHER" id="PTHR33445">
    <property type="entry name" value="ATP SYNTHASE SUBUNIT B', CHLOROPLASTIC"/>
    <property type="match status" value="1"/>
</dbReference>
<dbReference type="Pfam" id="PF00430">
    <property type="entry name" value="ATP-synt_B"/>
    <property type="match status" value="1"/>
</dbReference>
<protein>
    <recommendedName>
        <fullName evidence="1">ATP synthase subunit b 2</fullName>
    </recommendedName>
    <alternativeName>
        <fullName evidence="1">ATP synthase F(0) sector subunit b 2</fullName>
    </alternativeName>
    <alternativeName>
        <fullName evidence="1">ATPase subunit I 2</fullName>
    </alternativeName>
    <alternativeName>
        <fullName evidence="1">F-type ATPase subunit b 2</fullName>
        <shortName evidence="1">F-ATPase subunit b 2</shortName>
    </alternativeName>
</protein>
<proteinExistence type="inferred from homology"/>
<keyword id="KW-0066">ATP synthesis</keyword>
<keyword id="KW-0997">Cell inner membrane</keyword>
<keyword id="KW-1003">Cell membrane</keyword>
<keyword id="KW-0138">CF(0)</keyword>
<keyword id="KW-0375">Hydrogen ion transport</keyword>
<keyword id="KW-0406">Ion transport</keyword>
<keyword id="KW-0472">Membrane</keyword>
<keyword id="KW-1185">Reference proteome</keyword>
<keyword id="KW-0812">Transmembrane</keyword>
<keyword id="KW-1133">Transmembrane helix</keyword>
<keyword id="KW-0813">Transport</keyword>
<name>ATPF2_MARMM</name>
<comment type="function">
    <text evidence="1">F(1)F(0) ATP synthase produces ATP from ADP in the presence of a proton or sodium gradient. F-type ATPases consist of two structural domains, F(1) containing the extramembraneous catalytic core and F(0) containing the membrane proton channel, linked together by a central stalk and a peripheral stalk. During catalysis, ATP synthesis in the catalytic domain of F(1) is coupled via a rotary mechanism of the central stalk subunits to proton translocation.</text>
</comment>
<comment type="function">
    <text evidence="1">Component of the F(0) channel, it forms part of the peripheral stalk, linking F(1) to F(0).</text>
</comment>
<comment type="subunit">
    <text evidence="1">F-type ATPases have 2 components, F(1) - the catalytic core - and F(0) - the membrane proton channel. F(1) has five subunits: alpha(3), beta(3), gamma(1), delta(1), epsilon(1). F(0) has three main subunits: a(1), b(2) and c(10-14). The alpha and beta chains form an alternating ring which encloses part of the gamma chain. F(1) is attached to F(0) by a central stalk formed by the gamma and epsilon chains, while a peripheral stalk is formed by the delta and b chains.</text>
</comment>
<comment type="subcellular location">
    <subcellularLocation>
        <location evidence="1">Cell inner membrane</location>
        <topology evidence="1">Single-pass membrane protein</topology>
    </subcellularLocation>
</comment>
<comment type="similarity">
    <text evidence="1">Belongs to the ATPase B chain family.</text>
</comment>
<feature type="chain" id="PRO_0000368575" description="ATP synthase subunit b 2">
    <location>
        <begin position="1"/>
        <end position="183"/>
    </location>
</feature>
<feature type="transmembrane region" description="Helical" evidence="1">
    <location>
        <begin position="27"/>
        <end position="47"/>
    </location>
</feature>
<organism>
    <name type="scientific">Maricaulis maris (strain MCS10)</name>
    <name type="common">Caulobacter maris</name>
    <dbReference type="NCBI Taxonomy" id="394221"/>
    <lineage>
        <taxon>Bacteria</taxon>
        <taxon>Pseudomonadati</taxon>
        <taxon>Pseudomonadota</taxon>
        <taxon>Alphaproteobacteria</taxon>
        <taxon>Maricaulales</taxon>
        <taxon>Maricaulaceae</taxon>
        <taxon>Maricaulis</taxon>
    </lineage>
</organism>
<reference key="1">
    <citation type="submission" date="2006-08" db="EMBL/GenBank/DDBJ databases">
        <title>Complete sequence of Maricaulis maris MCS10.</title>
        <authorList>
            <consortium name="US DOE Joint Genome Institute"/>
            <person name="Copeland A."/>
            <person name="Lucas S."/>
            <person name="Lapidus A."/>
            <person name="Barry K."/>
            <person name="Detter J.C."/>
            <person name="Glavina del Rio T."/>
            <person name="Hammon N."/>
            <person name="Israni S."/>
            <person name="Dalin E."/>
            <person name="Tice H."/>
            <person name="Pitluck S."/>
            <person name="Saunders E."/>
            <person name="Brettin T."/>
            <person name="Bruce D."/>
            <person name="Han C."/>
            <person name="Tapia R."/>
            <person name="Gilna P."/>
            <person name="Schmutz J."/>
            <person name="Larimer F."/>
            <person name="Land M."/>
            <person name="Hauser L."/>
            <person name="Kyrpides N."/>
            <person name="Mikhailova N."/>
            <person name="Viollier P."/>
            <person name="Stephens C."/>
            <person name="Richardson P."/>
        </authorList>
    </citation>
    <scope>NUCLEOTIDE SEQUENCE [LARGE SCALE GENOMIC DNA]</scope>
    <source>
        <strain>MCS10</strain>
    </source>
</reference>
<gene>
    <name evidence="1" type="primary">atpF2</name>
    <name type="ordered locus">Mmar10_2204</name>
</gene>
<evidence type="ECO:0000255" key="1">
    <source>
        <dbReference type="HAMAP-Rule" id="MF_01398"/>
    </source>
</evidence>
<accession>Q0AK30</accession>